<name>SYT_SACD2</name>
<proteinExistence type="inferred from homology"/>
<reference key="1">
    <citation type="journal article" date="2008" name="PLoS Genet.">
        <title>Complete genome sequence of the complex carbohydrate-degrading marine bacterium, Saccharophagus degradans strain 2-40 T.</title>
        <authorList>
            <person name="Weiner R.M."/>
            <person name="Taylor L.E. II"/>
            <person name="Henrissat B."/>
            <person name="Hauser L."/>
            <person name="Land M."/>
            <person name="Coutinho P.M."/>
            <person name="Rancurel C."/>
            <person name="Saunders E.H."/>
            <person name="Longmire A.G."/>
            <person name="Zhang H."/>
            <person name="Bayer E.A."/>
            <person name="Gilbert H.J."/>
            <person name="Larimer F."/>
            <person name="Zhulin I.B."/>
            <person name="Ekborg N.A."/>
            <person name="Lamed R."/>
            <person name="Richardson P.M."/>
            <person name="Borovok I."/>
            <person name="Hutcheson S."/>
        </authorList>
    </citation>
    <scope>NUCLEOTIDE SEQUENCE [LARGE SCALE GENOMIC DNA]</scope>
    <source>
        <strain>2-40 / ATCC 43961 / DSM 17024</strain>
    </source>
</reference>
<keyword id="KW-0030">Aminoacyl-tRNA synthetase</keyword>
<keyword id="KW-0067">ATP-binding</keyword>
<keyword id="KW-0963">Cytoplasm</keyword>
<keyword id="KW-0436">Ligase</keyword>
<keyword id="KW-0479">Metal-binding</keyword>
<keyword id="KW-0547">Nucleotide-binding</keyword>
<keyword id="KW-0648">Protein biosynthesis</keyword>
<keyword id="KW-1185">Reference proteome</keyword>
<keyword id="KW-0694">RNA-binding</keyword>
<keyword id="KW-0820">tRNA-binding</keyword>
<keyword id="KW-0862">Zinc</keyword>
<protein>
    <recommendedName>
        <fullName evidence="1">Threonine--tRNA ligase</fullName>
        <ecNumber evidence="1">6.1.1.3</ecNumber>
    </recommendedName>
    <alternativeName>
        <fullName evidence="1">Threonyl-tRNA synthetase</fullName>
        <shortName evidence="1">ThrRS</shortName>
    </alternativeName>
</protein>
<gene>
    <name evidence="1" type="primary">thrS</name>
    <name type="ordered locus">Sde_1577</name>
</gene>
<evidence type="ECO:0000255" key="1">
    <source>
        <dbReference type="HAMAP-Rule" id="MF_00184"/>
    </source>
</evidence>
<evidence type="ECO:0000255" key="2">
    <source>
        <dbReference type="PROSITE-ProRule" id="PRU01228"/>
    </source>
</evidence>
<sequence>MPVITLPDGSKREYDAPISVMGVAADIGPGLAKATLAGVVDGKEVDASFEITQDVSLSIITAKSEEGLEVIRHSTAHLLAQAVKQLFPEAQVTIGPVIEDGFYYDFAYSRAFTPEDLVVIEEKMKELAKADFDVTRRVLPRDEASAYFRGIGEEYKAQIIDSIPANEELSLYKQGDFEDLCRGPHVPSTGKLEYFKLMKVAGAYWRGDSNNEMLTRVYGTAWASKKDLKAYVHRLEEAEKRDHRKLGKKFDLFHIQEEAPGMVFWHPNGWSIYTAIEEYMREVQRLNGYEEIKTPQVVDRSLWERSGHWDKFRDNMFTVESESRDYAVKPMNCPCHVQVFNQGLKSYRDLPLRLAEFGCCHRNEASGTLQGLMRVRGFVQDDAHIFCSESMIQDEVSVFTDLLFKVYKDFGFEDVIIRLSTRPEQRVGSDEVWDKAEKALSDALDAKGLPWQLLPGEGAFYGPKIEFSLKDCLGRVWQCGTIQVDFSMPGRLDAQFVAEDGSRQVPVMLHRAILGSFERFIGILIEEYEGAFPAWLAPTQAVLLNITDNQAEYVKKVENSLKNKGFRVNSDLRNEKIGFKIREHTIQKVPYLLVVGDQEVENNSVAVRGRGGEDLGVMTVDAFTALLEEQISSKAR</sequence>
<organism>
    <name type="scientific">Saccharophagus degradans (strain 2-40 / ATCC 43961 / DSM 17024)</name>
    <dbReference type="NCBI Taxonomy" id="203122"/>
    <lineage>
        <taxon>Bacteria</taxon>
        <taxon>Pseudomonadati</taxon>
        <taxon>Pseudomonadota</taxon>
        <taxon>Gammaproteobacteria</taxon>
        <taxon>Cellvibrionales</taxon>
        <taxon>Cellvibrionaceae</taxon>
        <taxon>Saccharophagus</taxon>
    </lineage>
</organism>
<comment type="function">
    <text evidence="1">Catalyzes the attachment of threonine to tRNA(Thr) in a two-step reaction: L-threonine is first activated by ATP to form Thr-AMP and then transferred to the acceptor end of tRNA(Thr). Also edits incorrectly charged L-seryl-tRNA(Thr).</text>
</comment>
<comment type="catalytic activity">
    <reaction evidence="1">
        <text>tRNA(Thr) + L-threonine + ATP = L-threonyl-tRNA(Thr) + AMP + diphosphate + H(+)</text>
        <dbReference type="Rhea" id="RHEA:24624"/>
        <dbReference type="Rhea" id="RHEA-COMP:9670"/>
        <dbReference type="Rhea" id="RHEA-COMP:9704"/>
        <dbReference type="ChEBI" id="CHEBI:15378"/>
        <dbReference type="ChEBI" id="CHEBI:30616"/>
        <dbReference type="ChEBI" id="CHEBI:33019"/>
        <dbReference type="ChEBI" id="CHEBI:57926"/>
        <dbReference type="ChEBI" id="CHEBI:78442"/>
        <dbReference type="ChEBI" id="CHEBI:78534"/>
        <dbReference type="ChEBI" id="CHEBI:456215"/>
        <dbReference type="EC" id="6.1.1.3"/>
    </reaction>
</comment>
<comment type="cofactor">
    <cofactor evidence="1">
        <name>Zn(2+)</name>
        <dbReference type="ChEBI" id="CHEBI:29105"/>
    </cofactor>
    <text evidence="1">Binds 1 zinc ion per subunit.</text>
</comment>
<comment type="subunit">
    <text evidence="1">Homodimer.</text>
</comment>
<comment type="subcellular location">
    <subcellularLocation>
        <location evidence="1">Cytoplasm</location>
    </subcellularLocation>
</comment>
<comment type="similarity">
    <text evidence="1">Belongs to the class-II aminoacyl-tRNA synthetase family.</text>
</comment>
<dbReference type="EC" id="6.1.1.3" evidence="1"/>
<dbReference type="EMBL" id="CP000282">
    <property type="protein sequence ID" value="ABD80839.1"/>
    <property type="molecule type" value="Genomic_DNA"/>
</dbReference>
<dbReference type="RefSeq" id="WP_011468059.1">
    <property type="nucleotide sequence ID" value="NC_007912.1"/>
</dbReference>
<dbReference type="SMR" id="Q21KE0"/>
<dbReference type="STRING" id="203122.Sde_1577"/>
<dbReference type="GeneID" id="98613253"/>
<dbReference type="KEGG" id="sde:Sde_1577"/>
<dbReference type="eggNOG" id="COG0441">
    <property type="taxonomic scope" value="Bacteria"/>
</dbReference>
<dbReference type="HOGENOM" id="CLU_008554_0_1_6"/>
<dbReference type="OrthoDB" id="9802304at2"/>
<dbReference type="Proteomes" id="UP000001947">
    <property type="component" value="Chromosome"/>
</dbReference>
<dbReference type="GO" id="GO:0005829">
    <property type="term" value="C:cytosol"/>
    <property type="evidence" value="ECO:0007669"/>
    <property type="project" value="TreeGrafter"/>
</dbReference>
<dbReference type="GO" id="GO:0005524">
    <property type="term" value="F:ATP binding"/>
    <property type="evidence" value="ECO:0007669"/>
    <property type="project" value="UniProtKB-UniRule"/>
</dbReference>
<dbReference type="GO" id="GO:0046872">
    <property type="term" value="F:metal ion binding"/>
    <property type="evidence" value="ECO:0007669"/>
    <property type="project" value="UniProtKB-KW"/>
</dbReference>
<dbReference type="GO" id="GO:0004829">
    <property type="term" value="F:threonine-tRNA ligase activity"/>
    <property type="evidence" value="ECO:0007669"/>
    <property type="project" value="UniProtKB-UniRule"/>
</dbReference>
<dbReference type="GO" id="GO:0000049">
    <property type="term" value="F:tRNA binding"/>
    <property type="evidence" value="ECO:0007669"/>
    <property type="project" value="UniProtKB-KW"/>
</dbReference>
<dbReference type="GO" id="GO:0006435">
    <property type="term" value="P:threonyl-tRNA aminoacylation"/>
    <property type="evidence" value="ECO:0007669"/>
    <property type="project" value="UniProtKB-UniRule"/>
</dbReference>
<dbReference type="CDD" id="cd01667">
    <property type="entry name" value="TGS_ThrRS"/>
    <property type="match status" value="1"/>
</dbReference>
<dbReference type="CDD" id="cd00860">
    <property type="entry name" value="ThrRS_anticodon"/>
    <property type="match status" value="1"/>
</dbReference>
<dbReference type="CDD" id="cd00771">
    <property type="entry name" value="ThrRS_core"/>
    <property type="match status" value="1"/>
</dbReference>
<dbReference type="FunFam" id="3.10.20.30:FF:000005">
    <property type="entry name" value="Threonine--tRNA ligase"/>
    <property type="match status" value="1"/>
</dbReference>
<dbReference type="FunFam" id="3.30.54.20:FF:000002">
    <property type="entry name" value="Threonine--tRNA ligase"/>
    <property type="match status" value="1"/>
</dbReference>
<dbReference type="FunFam" id="3.30.930.10:FF:000002">
    <property type="entry name" value="Threonine--tRNA ligase"/>
    <property type="match status" value="1"/>
</dbReference>
<dbReference type="FunFam" id="3.40.50.800:FF:000001">
    <property type="entry name" value="Threonine--tRNA ligase"/>
    <property type="match status" value="1"/>
</dbReference>
<dbReference type="FunFam" id="3.30.980.10:FF:000005">
    <property type="entry name" value="Threonyl-tRNA synthetase, mitochondrial"/>
    <property type="match status" value="1"/>
</dbReference>
<dbReference type="Gene3D" id="3.10.20.30">
    <property type="match status" value="1"/>
</dbReference>
<dbReference type="Gene3D" id="3.30.54.20">
    <property type="match status" value="1"/>
</dbReference>
<dbReference type="Gene3D" id="3.40.50.800">
    <property type="entry name" value="Anticodon-binding domain"/>
    <property type="match status" value="1"/>
</dbReference>
<dbReference type="Gene3D" id="3.30.930.10">
    <property type="entry name" value="Bira Bifunctional Protein, Domain 2"/>
    <property type="match status" value="1"/>
</dbReference>
<dbReference type="Gene3D" id="3.30.980.10">
    <property type="entry name" value="Threonyl-trna Synthetase, Chain A, domain 2"/>
    <property type="match status" value="1"/>
</dbReference>
<dbReference type="HAMAP" id="MF_00184">
    <property type="entry name" value="Thr_tRNA_synth"/>
    <property type="match status" value="1"/>
</dbReference>
<dbReference type="InterPro" id="IPR002314">
    <property type="entry name" value="aa-tRNA-synt_IIb"/>
</dbReference>
<dbReference type="InterPro" id="IPR006195">
    <property type="entry name" value="aa-tRNA-synth_II"/>
</dbReference>
<dbReference type="InterPro" id="IPR045864">
    <property type="entry name" value="aa-tRNA-synth_II/BPL/LPL"/>
</dbReference>
<dbReference type="InterPro" id="IPR004154">
    <property type="entry name" value="Anticodon-bd"/>
</dbReference>
<dbReference type="InterPro" id="IPR036621">
    <property type="entry name" value="Anticodon-bd_dom_sf"/>
</dbReference>
<dbReference type="InterPro" id="IPR012675">
    <property type="entry name" value="Beta-grasp_dom_sf"/>
</dbReference>
<dbReference type="InterPro" id="IPR004095">
    <property type="entry name" value="TGS"/>
</dbReference>
<dbReference type="InterPro" id="IPR012676">
    <property type="entry name" value="TGS-like"/>
</dbReference>
<dbReference type="InterPro" id="IPR002320">
    <property type="entry name" value="Thr-tRNA-ligase_IIa"/>
</dbReference>
<dbReference type="InterPro" id="IPR018163">
    <property type="entry name" value="Thr/Ala-tRNA-synth_IIc_edit"/>
</dbReference>
<dbReference type="InterPro" id="IPR047246">
    <property type="entry name" value="ThrRS_anticodon"/>
</dbReference>
<dbReference type="InterPro" id="IPR033728">
    <property type="entry name" value="ThrRS_core"/>
</dbReference>
<dbReference type="InterPro" id="IPR012947">
    <property type="entry name" value="tRNA_SAD"/>
</dbReference>
<dbReference type="NCBIfam" id="TIGR00418">
    <property type="entry name" value="thrS"/>
    <property type="match status" value="1"/>
</dbReference>
<dbReference type="PANTHER" id="PTHR11451:SF44">
    <property type="entry name" value="THREONINE--TRNA LIGASE, CHLOROPLASTIC_MITOCHONDRIAL 2"/>
    <property type="match status" value="1"/>
</dbReference>
<dbReference type="PANTHER" id="PTHR11451">
    <property type="entry name" value="THREONINE-TRNA LIGASE"/>
    <property type="match status" value="1"/>
</dbReference>
<dbReference type="Pfam" id="PF03129">
    <property type="entry name" value="HGTP_anticodon"/>
    <property type="match status" value="1"/>
</dbReference>
<dbReference type="Pfam" id="PF02824">
    <property type="entry name" value="TGS"/>
    <property type="match status" value="1"/>
</dbReference>
<dbReference type="Pfam" id="PF00587">
    <property type="entry name" value="tRNA-synt_2b"/>
    <property type="match status" value="1"/>
</dbReference>
<dbReference type="Pfam" id="PF07973">
    <property type="entry name" value="tRNA_SAD"/>
    <property type="match status" value="1"/>
</dbReference>
<dbReference type="PRINTS" id="PR01047">
    <property type="entry name" value="TRNASYNTHTHR"/>
</dbReference>
<dbReference type="SMART" id="SM00863">
    <property type="entry name" value="tRNA_SAD"/>
    <property type="match status" value="1"/>
</dbReference>
<dbReference type="SUPFAM" id="SSF52954">
    <property type="entry name" value="Class II aaRS ABD-related"/>
    <property type="match status" value="1"/>
</dbReference>
<dbReference type="SUPFAM" id="SSF55681">
    <property type="entry name" value="Class II aaRS and biotin synthetases"/>
    <property type="match status" value="1"/>
</dbReference>
<dbReference type="SUPFAM" id="SSF81271">
    <property type="entry name" value="TGS-like"/>
    <property type="match status" value="1"/>
</dbReference>
<dbReference type="SUPFAM" id="SSF55186">
    <property type="entry name" value="ThrRS/AlaRS common domain"/>
    <property type="match status" value="1"/>
</dbReference>
<dbReference type="PROSITE" id="PS50862">
    <property type="entry name" value="AA_TRNA_LIGASE_II"/>
    <property type="match status" value="1"/>
</dbReference>
<dbReference type="PROSITE" id="PS51880">
    <property type="entry name" value="TGS"/>
    <property type="match status" value="1"/>
</dbReference>
<accession>Q21KE0</accession>
<feature type="chain" id="PRO_1000020499" description="Threonine--tRNA ligase">
    <location>
        <begin position="1"/>
        <end position="636"/>
    </location>
</feature>
<feature type="domain" description="TGS" evidence="2">
    <location>
        <begin position="1"/>
        <end position="61"/>
    </location>
</feature>
<feature type="region of interest" description="Catalytic" evidence="1">
    <location>
        <begin position="242"/>
        <end position="533"/>
    </location>
</feature>
<feature type="binding site" evidence="1">
    <location>
        <position position="333"/>
    </location>
    <ligand>
        <name>Zn(2+)</name>
        <dbReference type="ChEBI" id="CHEBI:29105"/>
    </ligand>
</feature>
<feature type="binding site" evidence="1">
    <location>
        <position position="384"/>
    </location>
    <ligand>
        <name>Zn(2+)</name>
        <dbReference type="ChEBI" id="CHEBI:29105"/>
    </ligand>
</feature>
<feature type="binding site" evidence="1">
    <location>
        <position position="510"/>
    </location>
    <ligand>
        <name>Zn(2+)</name>
        <dbReference type="ChEBI" id="CHEBI:29105"/>
    </ligand>
</feature>